<comment type="function">
    <text evidence="3">Omega-conotoxins act at presynaptic membranes, they bind and block voltage-gated calcium channels. This toxin inhibits neurotransmitter release, it blocks N-type calcium channels, probably a N-type (Cav2.2/CACNA1B) calcium channel variant.</text>
</comment>
<comment type="subcellular location">
    <subcellularLocation>
        <location evidence="2">Secreted</location>
    </subcellularLocation>
</comment>
<comment type="tissue specificity">
    <text evidence="6">Expressed by the venom duct.</text>
</comment>
<comment type="domain">
    <text evidence="2">The presence of a 'disulfide through disulfide knot' structurally defines this protein as a knottin.</text>
</comment>
<comment type="domain">
    <text evidence="5">The cysteine framework is VI/VII (C-C-CC-C-C).</text>
</comment>
<comment type="pharmaceutical">
    <text>Is under phase I clinical trial under the name AM336 by Amrad Corporation Limited for treating severe morphine-resistant pain stress.</text>
</comment>
<comment type="similarity">
    <text evidence="5">Belongs to the conotoxin O1 superfamily.</text>
</comment>
<accession>P58920</accession>
<feature type="signal peptide" evidence="1">
    <location>
        <begin position="1"/>
        <end position="22"/>
    </location>
</feature>
<feature type="propeptide" id="PRO_0000034964" evidence="2">
    <location>
        <begin position="23"/>
        <end position="45"/>
    </location>
</feature>
<feature type="peptide" id="PRO_0000034965" description="Omega-conotoxin CVID">
    <location>
        <begin position="46"/>
        <end position="72"/>
    </location>
</feature>
<feature type="site" description="Important for calcium channel binding">
    <location>
        <position position="58"/>
    </location>
</feature>
<feature type="modified residue" description="Cysteine amide" evidence="2">
    <location>
        <position position="72"/>
    </location>
</feature>
<feature type="disulfide bond" evidence="2">
    <location>
        <begin position="46"/>
        <end position="61"/>
    </location>
</feature>
<feature type="disulfide bond" evidence="2">
    <location>
        <begin position="53"/>
        <end position="65"/>
    </location>
</feature>
<feature type="disulfide bond" evidence="2">
    <location>
        <begin position="60"/>
        <end position="72"/>
    </location>
</feature>
<feature type="mutagenesis site" description="20% reduction of neurotransmitter release." evidence="3">
    <original>K</original>
    <variation>R</variation>
    <location>
        <position position="55"/>
    </location>
</feature>
<feature type="mutagenesis site" description="No activity on neurotransmitter release." evidence="3">
    <original>Y</original>
    <variation>F</variation>
    <location>
        <position position="58"/>
    </location>
</feature>
<sequence>MKLTCVVIVAVLLLTACQLITADDSRGTQKHRALRSDTKLSMSTRCKSKGAKCSKLMYDCCSGSCSGTVGRCG</sequence>
<organism>
    <name type="scientific">Conus catus</name>
    <name type="common">Cat cone</name>
    <dbReference type="NCBI Taxonomy" id="101291"/>
    <lineage>
        <taxon>Eukaryota</taxon>
        <taxon>Metazoa</taxon>
        <taxon>Spiralia</taxon>
        <taxon>Lophotrochozoa</taxon>
        <taxon>Mollusca</taxon>
        <taxon>Gastropoda</taxon>
        <taxon>Caenogastropoda</taxon>
        <taxon>Neogastropoda</taxon>
        <taxon>Conoidea</taxon>
        <taxon>Conidae</taxon>
        <taxon>Conus</taxon>
        <taxon>Pionoconus</taxon>
    </lineage>
</organism>
<reference key="1">
    <citation type="journal article" date="2000" name="J. Biol. Chem.">
        <title>Novel omega-conotoxins from Conus catus discriminate among neuronal calcium channel subtypes.</title>
        <authorList>
            <person name="Lewis R.J."/>
            <person name="Nielsen K.J."/>
            <person name="Craik D.J."/>
            <person name="Loughnan M.L."/>
            <person name="Adams D.A."/>
            <person name="Sharpe I.A."/>
            <person name="Luchian T."/>
            <person name="Adams D.J."/>
            <person name="Bond T."/>
            <person name="Thomas L."/>
            <person name="Jones A."/>
            <person name="Matheson J.-L."/>
            <person name="Drinkwater R."/>
            <person name="Andrews P.R."/>
            <person name="Alewood P.F."/>
        </authorList>
    </citation>
    <scope>NUCLEOTIDE SEQUENCE [MRNA]</scope>
    <scope>PROTEIN SEQUENCE OF 46-72</scope>
    <scope>AMIDATION AT CYS-72</scope>
    <scope>SYNTHESIS OF 46-72</scope>
    <scope>STRUCTURE BY NMR OF 46-72</scope>
    <scope>DISULFIDE BOND</scope>
    <scope>SUBCELLULAR LOCATION</scope>
    <source>
        <tissue>Venom</tissue>
        <tissue>Venom duct</tissue>
    </source>
</reference>
<reference key="2">
    <citation type="journal article" date="2003" name="J. Biol. Chem.">
        <title>Omega-conotoxin CVID inhibits a pharmacologically distinct voltage-sensitive calcium channel associated with transmitter release from preganglionic nerve terminals.</title>
        <authorList>
            <person name="Adams D.J."/>
            <person name="Smith A.B."/>
            <person name="Schroeder C.I."/>
            <person name="Yasuda T."/>
            <person name="Lewis R.J."/>
        </authorList>
    </citation>
    <scope>FUNCTION</scope>
    <scope>MUTAGENESIS OF LYS-55 AND TYR-58</scope>
    <scope>STRUCTURE BY NMR OF 46-72</scope>
</reference>
<protein>
    <recommendedName>
        <fullName evidence="4">Omega-conotoxin CVID</fullName>
    </recommendedName>
    <alternativeName>
        <fullName>AM-336</fullName>
        <shortName evidence="4">AM336</shortName>
    </alternativeName>
    <alternativeName>
        <fullName>CNSB004</fullName>
    </alternativeName>
    <alternativeName>
        <fullName>Leconotide</fullName>
    </alternativeName>
</protein>
<name>O16D_CONCT</name>
<keyword id="KW-0027">Amidation</keyword>
<keyword id="KW-0108">Calcium channel impairing toxin</keyword>
<keyword id="KW-0903">Direct protein sequencing</keyword>
<keyword id="KW-1015">Disulfide bond</keyword>
<keyword id="KW-0872">Ion channel impairing toxin</keyword>
<keyword id="KW-0960">Knottin</keyword>
<keyword id="KW-0528">Neurotoxin</keyword>
<keyword id="KW-0582">Pharmaceutical</keyword>
<keyword id="KW-0638">Presynaptic neurotoxin</keyword>
<keyword id="KW-0964">Secreted</keyword>
<keyword id="KW-0732">Signal</keyword>
<keyword id="KW-0800">Toxin</keyword>
<keyword id="KW-1218">Voltage-gated calcium channel impairing toxin</keyword>
<evidence type="ECO:0000255" key="1"/>
<evidence type="ECO:0000269" key="2">
    <source>
    </source>
</evidence>
<evidence type="ECO:0000269" key="3">
    <source>
    </source>
</evidence>
<evidence type="ECO:0000303" key="4">
    <source>
    </source>
</evidence>
<evidence type="ECO:0000305" key="5"/>
<evidence type="ECO:0000305" key="6">
    <source>
    </source>
</evidence>
<proteinExistence type="evidence at protein level"/>
<dbReference type="SMR" id="P58920"/>
<dbReference type="ConoServer" id="1569">
    <property type="toxin name" value="CVID precursor"/>
</dbReference>
<dbReference type="GO" id="GO:0005576">
    <property type="term" value="C:extracellular region"/>
    <property type="evidence" value="ECO:0007669"/>
    <property type="project" value="UniProtKB-SubCell"/>
</dbReference>
<dbReference type="GO" id="GO:0044231">
    <property type="term" value="C:host cell presynaptic membrane"/>
    <property type="evidence" value="ECO:0007669"/>
    <property type="project" value="UniProtKB-KW"/>
</dbReference>
<dbReference type="GO" id="GO:0005246">
    <property type="term" value="F:calcium channel regulator activity"/>
    <property type="evidence" value="ECO:0007669"/>
    <property type="project" value="UniProtKB-KW"/>
</dbReference>
<dbReference type="GO" id="GO:0008200">
    <property type="term" value="F:ion channel inhibitor activity"/>
    <property type="evidence" value="ECO:0007669"/>
    <property type="project" value="InterPro"/>
</dbReference>
<dbReference type="GO" id="GO:0090729">
    <property type="term" value="F:toxin activity"/>
    <property type="evidence" value="ECO:0007669"/>
    <property type="project" value="UniProtKB-KW"/>
</dbReference>
<dbReference type="InterPro" id="IPR004214">
    <property type="entry name" value="Conotoxin"/>
</dbReference>
<dbReference type="InterPro" id="IPR012321">
    <property type="entry name" value="Conotoxin_omega-typ_CS"/>
</dbReference>
<dbReference type="Pfam" id="PF02950">
    <property type="entry name" value="Conotoxin"/>
    <property type="match status" value="1"/>
</dbReference>
<dbReference type="SUPFAM" id="SSF57059">
    <property type="entry name" value="omega toxin-like"/>
    <property type="match status" value="1"/>
</dbReference>
<dbReference type="PROSITE" id="PS60004">
    <property type="entry name" value="OMEGA_CONOTOXIN"/>
    <property type="match status" value="1"/>
</dbReference>